<organism>
    <name type="scientific">Chlamydia trachomatis serovar L2 (strain ATCC VR-902B / DSM 19102 / 434/Bu)</name>
    <dbReference type="NCBI Taxonomy" id="471472"/>
    <lineage>
        <taxon>Bacteria</taxon>
        <taxon>Pseudomonadati</taxon>
        <taxon>Chlamydiota</taxon>
        <taxon>Chlamydiia</taxon>
        <taxon>Chlamydiales</taxon>
        <taxon>Chlamydiaceae</taxon>
        <taxon>Chlamydia/Chlamydophila group</taxon>
        <taxon>Chlamydia</taxon>
    </lineage>
</organism>
<gene>
    <name evidence="1" type="primary">rpmA</name>
    <name type="ordered locus">CTL0676</name>
</gene>
<accession>B0B7Y9</accession>
<feature type="chain" id="PRO_1000128716" description="Large ribosomal subunit protein bL27">
    <location>
        <begin position="1"/>
        <end position="83"/>
    </location>
</feature>
<feature type="region of interest" description="Disordered" evidence="2">
    <location>
        <begin position="1"/>
        <end position="25"/>
    </location>
</feature>
<comment type="similarity">
    <text evidence="1">Belongs to the bacterial ribosomal protein bL27 family.</text>
</comment>
<name>RL27_CHLT2</name>
<sequence length="83" mass="8916">MAHKKGQGASRNGRDSESKRLGLKVGAGQRVSTGSILVRQRGTKWHPAVNVGRGKDDTLFALADGIVVMKKTDRTYVSVIPQA</sequence>
<proteinExistence type="inferred from homology"/>
<protein>
    <recommendedName>
        <fullName evidence="1">Large ribosomal subunit protein bL27</fullName>
    </recommendedName>
    <alternativeName>
        <fullName evidence="3">50S ribosomal protein L27</fullName>
    </alternativeName>
</protein>
<evidence type="ECO:0000255" key="1">
    <source>
        <dbReference type="HAMAP-Rule" id="MF_00539"/>
    </source>
</evidence>
<evidence type="ECO:0000256" key="2">
    <source>
        <dbReference type="SAM" id="MobiDB-lite"/>
    </source>
</evidence>
<evidence type="ECO:0000305" key="3"/>
<dbReference type="EMBL" id="AM884176">
    <property type="protein sequence ID" value="CAP04115.1"/>
    <property type="molecule type" value="Genomic_DNA"/>
</dbReference>
<dbReference type="RefSeq" id="WP_009873798.1">
    <property type="nucleotide sequence ID" value="NC_010287.1"/>
</dbReference>
<dbReference type="RefSeq" id="YP_001654748.1">
    <property type="nucleotide sequence ID" value="NC_010287.1"/>
</dbReference>
<dbReference type="SMR" id="B0B7Y9"/>
<dbReference type="KEGG" id="ctb:CTL0676"/>
<dbReference type="PATRIC" id="fig|471472.4.peg.726"/>
<dbReference type="HOGENOM" id="CLU_095424_4_0_0"/>
<dbReference type="Proteomes" id="UP001154402">
    <property type="component" value="Chromosome"/>
</dbReference>
<dbReference type="GO" id="GO:0022625">
    <property type="term" value="C:cytosolic large ribosomal subunit"/>
    <property type="evidence" value="ECO:0007669"/>
    <property type="project" value="TreeGrafter"/>
</dbReference>
<dbReference type="GO" id="GO:0003735">
    <property type="term" value="F:structural constituent of ribosome"/>
    <property type="evidence" value="ECO:0007669"/>
    <property type="project" value="InterPro"/>
</dbReference>
<dbReference type="GO" id="GO:0006412">
    <property type="term" value="P:translation"/>
    <property type="evidence" value="ECO:0007669"/>
    <property type="project" value="UniProtKB-UniRule"/>
</dbReference>
<dbReference type="FunFam" id="2.40.50.100:FF:000020">
    <property type="entry name" value="50S ribosomal protein L27"/>
    <property type="match status" value="1"/>
</dbReference>
<dbReference type="Gene3D" id="2.40.50.100">
    <property type="match status" value="1"/>
</dbReference>
<dbReference type="HAMAP" id="MF_00539">
    <property type="entry name" value="Ribosomal_bL27"/>
    <property type="match status" value="1"/>
</dbReference>
<dbReference type="InterPro" id="IPR001684">
    <property type="entry name" value="Ribosomal_bL27"/>
</dbReference>
<dbReference type="NCBIfam" id="TIGR00062">
    <property type="entry name" value="L27"/>
    <property type="match status" value="1"/>
</dbReference>
<dbReference type="PANTHER" id="PTHR15893:SF0">
    <property type="entry name" value="LARGE RIBOSOMAL SUBUNIT PROTEIN BL27M"/>
    <property type="match status" value="1"/>
</dbReference>
<dbReference type="PANTHER" id="PTHR15893">
    <property type="entry name" value="RIBOSOMAL PROTEIN L27"/>
    <property type="match status" value="1"/>
</dbReference>
<dbReference type="Pfam" id="PF01016">
    <property type="entry name" value="Ribosomal_L27"/>
    <property type="match status" value="1"/>
</dbReference>
<dbReference type="PRINTS" id="PR00063">
    <property type="entry name" value="RIBOSOMALL27"/>
</dbReference>
<dbReference type="SUPFAM" id="SSF110324">
    <property type="entry name" value="Ribosomal L27 protein-like"/>
    <property type="match status" value="1"/>
</dbReference>
<keyword id="KW-0687">Ribonucleoprotein</keyword>
<keyword id="KW-0689">Ribosomal protein</keyword>
<reference key="1">
    <citation type="journal article" date="2008" name="Genome Res.">
        <title>Chlamydia trachomatis: genome sequence analysis of lymphogranuloma venereum isolates.</title>
        <authorList>
            <person name="Thomson N.R."/>
            <person name="Holden M.T.G."/>
            <person name="Carder C."/>
            <person name="Lennard N."/>
            <person name="Lockey S.J."/>
            <person name="Marsh P."/>
            <person name="Skipp P."/>
            <person name="O'Connor C.D."/>
            <person name="Goodhead I."/>
            <person name="Norbertzcak H."/>
            <person name="Harris B."/>
            <person name="Ormond D."/>
            <person name="Rance R."/>
            <person name="Quail M.A."/>
            <person name="Parkhill J."/>
            <person name="Stephens R.S."/>
            <person name="Clarke I.N."/>
        </authorList>
    </citation>
    <scope>NUCLEOTIDE SEQUENCE [LARGE SCALE GENOMIC DNA]</scope>
    <source>
        <strain>ATCC VR-902B / DSM 19102 / 434/Bu</strain>
    </source>
</reference>